<feature type="chain" id="PRO_1000010835" description="Elongation factor P">
    <location>
        <begin position="1"/>
        <end position="188"/>
    </location>
</feature>
<accession>A8GW85</accession>
<protein>
    <recommendedName>
        <fullName evidence="1">Elongation factor P</fullName>
        <shortName evidence="1">EF-P</shortName>
    </recommendedName>
</protein>
<dbReference type="EMBL" id="CP000849">
    <property type="protein sequence ID" value="ABV79112.1"/>
    <property type="molecule type" value="Genomic_DNA"/>
</dbReference>
<dbReference type="RefSeq" id="WP_011477633.1">
    <property type="nucleotide sequence ID" value="NC_009883.1"/>
</dbReference>
<dbReference type="SMR" id="A8GW85"/>
<dbReference type="KEGG" id="rbo:A1I_03795"/>
<dbReference type="HOGENOM" id="CLU_074944_1_1_5"/>
<dbReference type="UniPathway" id="UPA00345"/>
<dbReference type="GO" id="GO:0005737">
    <property type="term" value="C:cytoplasm"/>
    <property type="evidence" value="ECO:0007669"/>
    <property type="project" value="UniProtKB-SubCell"/>
</dbReference>
<dbReference type="GO" id="GO:0003746">
    <property type="term" value="F:translation elongation factor activity"/>
    <property type="evidence" value="ECO:0007669"/>
    <property type="project" value="UniProtKB-UniRule"/>
</dbReference>
<dbReference type="GO" id="GO:0043043">
    <property type="term" value="P:peptide biosynthetic process"/>
    <property type="evidence" value="ECO:0007669"/>
    <property type="project" value="InterPro"/>
</dbReference>
<dbReference type="CDD" id="cd04470">
    <property type="entry name" value="S1_EF-P_repeat_1"/>
    <property type="match status" value="1"/>
</dbReference>
<dbReference type="FunFam" id="2.30.30.30:FF:000003">
    <property type="entry name" value="Elongation factor P"/>
    <property type="match status" value="1"/>
</dbReference>
<dbReference type="FunFam" id="2.40.50.140:FF:000004">
    <property type="entry name" value="Elongation factor P"/>
    <property type="match status" value="1"/>
</dbReference>
<dbReference type="FunFam" id="2.40.50.140:FF:000009">
    <property type="entry name" value="Elongation factor P"/>
    <property type="match status" value="1"/>
</dbReference>
<dbReference type="Gene3D" id="2.30.30.30">
    <property type="match status" value="1"/>
</dbReference>
<dbReference type="Gene3D" id="2.40.50.140">
    <property type="entry name" value="Nucleic acid-binding proteins"/>
    <property type="match status" value="2"/>
</dbReference>
<dbReference type="HAMAP" id="MF_00141">
    <property type="entry name" value="EF_P"/>
    <property type="match status" value="1"/>
</dbReference>
<dbReference type="InterPro" id="IPR015365">
    <property type="entry name" value="Elong-fact-P_C"/>
</dbReference>
<dbReference type="InterPro" id="IPR012340">
    <property type="entry name" value="NA-bd_OB-fold"/>
</dbReference>
<dbReference type="InterPro" id="IPR014722">
    <property type="entry name" value="Rib_uL2_dom2"/>
</dbReference>
<dbReference type="InterPro" id="IPR020599">
    <property type="entry name" value="Transl_elong_fac_P/YeiP"/>
</dbReference>
<dbReference type="InterPro" id="IPR013185">
    <property type="entry name" value="Transl_elong_KOW-like"/>
</dbReference>
<dbReference type="InterPro" id="IPR001059">
    <property type="entry name" value="Transl_elong_P/YeiP_cen"/>
</dbReference>
<dbReference type="InterPro" id="IPR013852">
    <property type="entry name" value="Transl_elong_P/YeiP_CS"/>
</dbReference>
<dbReference type="InterPro" id="IPR011768">
    <property type="entry name" value="Transl_elongation_fac_P"/>
</dbReference>
<dbReference type="InterPro" id="IPR008991">
    <property type="entry name" value="Translation_prot_SH3-like_sf"/>
</dbReference>
<dbReference type="NCBIfam" id="TIGR00038">
    <property type="entry name" value="efp"/>
    <property type="match status" value="1"/>
</dbReference>
<dbReference type="NCBIfam" id="NF001810">
    <property type="entry name" value="PRK00529.1"/>
    <property type="match status" value="1"/>
</dbReference>
<dbReference type="PANTHER" id="PTHR30053">
    <property type="entry name" value="ELONGATION FACTOR P"/>
    <property type="match status" value="1"/>
</dbReference>
<dbReference type="PANTHER" id="PTHR30053:SF14">
    <property type="entry name" value="TRANSLATION ELONGATION FACTOR KOW-LIKE DOMAIN-CONTAINING PROTEIN"/>
    <property type="match status" value="1"/>
</dbReference>
<dbReference type="Pfam" id="PF01132">
    <property type="entry name" value="EFP"/>
    <property type="match status" value="1"/>
</dbReference>
<dbReference type="Pfam" id="PF08207">
    <property type="entry name" value="EFP_N"/>
    <property type="match status" value="1"/>
</dbReference>
<dbReference type="Pfam" id="PF09285">
    <property type="entry name" value="Elong-fact-P_C"/>
    <property type="match status" value="1"/>
</dbReference>
<dbReference type="PIRSF" id="PIRSF005901">
    <property type="entry name" value="EF-P"/>
    <property type="match status" value="1"/>
</dbReference>
<dbReference type="SMART" id="SM01185">
    <property type="entry name" value="EFP"/>
    <property type="match status" value="1"/>
</dbReference>
<dbReference type="SMART" id="SM00841">
    <property type="entry name" value="Elong-fact-P_C"/>
    <property type="match status" value="1"/>
</dbReference>
<dbReference type="SUPFAM" id="SSF50249">
    <property type="entry name" value="Nucleic acid-binding proteins"/>
    <property type="match status" value="2"/>
</dbReference>
<dbReference type="SUPFAM" id="SSF50104">
    <property type="entry name" value="Translation proteins SH3-like domain"/>
    <property type="match status" value="1"/>
</dbReference>
<dbReference type="PROSITE" id="PS01275">
    <property type="entry name" value="EFP"/>
    <property type="match status" value="1"/>
</dbReference>
<reference key="1">
    <citation type="submission" date="2007-09" db="EMBL/GenBank/DDBJ databases">
        <title>Complete genome sequencing of Rickettsia bellii.</title>
        <authorList>
            <person name="Madan A."/>
            <person name="Lee H."/>
            <person name="Madan A."/>
            <person name="Yoon J.-G."/>
            <person name="Ryu G.-Y."/>
            <person name="Dasch G."/>
            <person name="Ereemeva M."/>
        </authorList>
    </citation>
    <scope>NUCLEOTIDE SEQUENCE [LARGE SCALE GENOMIC DNA]</scope>
    <source>
        <strain>OSU 85-389</strain>
    </source>
</reference>
<keyword id="KW-0963">Cytoplasm</keyword>
<keyword id="KW-0251">Elongation factor</keyword>
<keyword id="KW-0648">Protein biosynthesis</keyword>
<sequence>MKISANSIRTGNILVYNNDLWVVSKQPEHTQPGKGGAYVQVEMKNLKTGTKRNERFSSSDHLEKAELEQKDYQFLYFEDNNIVLMDNQTFEQISVNKEILDEKLPFLTENMIVKVEFYNEKPLSIELPATVILEIIETDPVIKGATATASYKPATLANGVKVKVPQYLEIGEKIVVKTEDLTYVERSK</sequence>
<proteinExistence type="inferred from homology"/>
<gene>
    <name evidence="1" type="primary">efp</name>
    <name type="ordered locus">A1I_03795</name>
</gene>
<evidence type="ECO:0000255" key="1">
    <source>
        <dbReference type="HAMAP-Rule" id="MF_00141"/>
    </source>
</evidence>
<organism>
    <name type="scientific">Rickettsia bellii (strain OSU 85-389)</name>
    <dbReference type="NCBI Taxonomy" id="391896"/>
    <lineage>
        <taxon>Bacteria</taxon>
        <taxon>Pseudomonadati</taxon>
        <taxon>Pseudomonadota</taxon>
        <taxon>Alphaproteobacteria</taxon>
        <taxon>Rickettsiales</taxon>
        <taxon>Rickettsiaceae</taxon>
        <taxon>Rickettsieae</taxon>
        <taxon>Rickettsia</taxon>
        <taxon>belli group</taxon>
    </lineage>
</organism>
<name>EFP_RICB8</name>
<comment type="function">
    <text evidence="1">Involved in peptide bond synthesis. Stimulates efficient translation and peptide-bond synthesis on native or reconstituted 70S ribosomes in vitro. Probably functions indirectly by altering the affinity of the ribosome for aminoacyl-tRNA, thus increasing their reactivity as acceptors for peptidyl transferase.</text>
</comment>
<comment type="pathway">
    <text evidence="1">Protein biosynthesis; polypeptide chain elongation.</text>
</comment>
<comment type="subcellular location">
    <subcellularLocation>
        <location evidence="1">Cytoplasm</location>
    </subcellularLocation>
</comment>
<comment type="similarity">
    <text evidence="1">Belongs to the elongation factor P family.</text>
</comment>